<evidence type="ECO:0000255" key="1">
    <source>
        <dbReference type="HAMAP-Rule" id="MF_00575"/>
    </source>
</evidence>
<feature type="chain" id="PRO_1000129540" description="UDP-2,3-diacylglucosamine hydrolase">
    <location>
        <begin position="1"/>
        <end position="248"/>
    </location>
</feature>
<feature type="binding site" evidence="1">
    <location>
        <position position="8"/>
    </location>
    <ligand>
        <name>Mn(2+)</name>
        <dbReference type="ChEBI" id="CHEBI:29035"/>
        <label>1</label>
    </ligand>
</feature>
<feature type="binding site" evidence="1">
    <location>
        <position position="10"/>
    </location>
    <ligand>
        <name>Mn(2+)</name>
        <dbReference type="ChEBI" id="CHEBI:29035"/>
        <label>1</label>
    </ligand>
</feature>
<feature type="binding site" evidence="1">
    <location>
        <position position="41"/>
    </location>
    <ligand>
        <name>Mn(2+)</name>
        <dbReference type="ChEBI" id="CHEBI:29035"/>
        <label>1</label>
    </ligand>
</feature>
<feature type="binding site" evidence="1">
    <location>
        <position position="41"/>
    </location>
    <ligand>
        <name>Mn(2+)</name>
        <dbReference type="ChEBI" id="CHEBI:29035"/>
        <label>2</label>
    </ligand>
</feature>
<feature type="binding site" evidence="1">
    <location>
        <begin position="79"/>
        <end position="80"/>
    </location>
    <ligand>
        <name>substrate</name>
    </ligand>
</feature>
<feature type="binding site" evidence="1">
    <location>
        <position position="79"/>
    </location>
    <ligand>
        <name>Mn(2+)</name>
        <dbReference type="ChEBI" id="CHEBI:29035"/>
        <label>2</label>
    </ligand>
</feature>
<feature type="binding site" evidence="1">
    <location>
        <position position="114"/>
    </location>
    <ligand>
        <name>Mn(2+)</name>
        <dbReference type="ChEBI" id="CHEBI:29035"/>
        <label>2</label>
    </ligand>
</feature>
<feature type="binding site" evidence="1">
    <location>
        <position position="122"/>
    </location>
    <ligand>
        <name>substrate</name>
    </ligand>
</feature>
<feature type="binding site" evidence="1">
    <location>
        <position position="160"/>
    </location>
    <ligand>
        <name>substrate</name>
    </ligand>
</feature>
<feature type="binding site" evidence="1">
    <location>
        <position position="171"/>
    </location>
    <ligand>
        <name>substrate</name>
    </ligand>
</feature>
<feature type="binding site" evidence="1">
    <location>
        <position position="202"/>
    </location>
    <ligand>
        <name>Mn(2+)</name>
        <dbReference type="ChEBI" id="CHEBI:29035"/>
        <label>2</label>
    </ligand>
</feature>
<feature type="binding site" evidence="1">
    <location>
        <position position="202"/>
    </location>
    <ligand>
        <name>substrate</name>
    </ligand>
</feature>
<feature type="binding site" evidence="1">
    <location>
        <position position="204"/>
    </location>
    <ligand>
        <name>Mn(2+)</name>
        <dbReference type="ChEBI" id="CHEBI:29035"/>
        <label>1</label>
    </ligand>
</feature>
<protein>
    <recommendedName>
        <fullName evidence="1">UDP-2,3-diacylglucosamine hydrolase</fullName>
        <ecNumber evidence="1">3.6.1.54</ecNumber>
    </recommendedName>
    <alternativeName>
        <fullName evidence="1">UDP-2,3-diacylglucosamine diphosphatase</fullName>
    </alternativeName>
</protein>
<name>LPXH_STRM5</name>
<proteinExistence type="inferred from homology"/>
<keyword id="KW-0997">Cell inner membrane</keyword>
<keyword id="KW-1003">Cell membrane</keyword>
<keyword id="KW-0378">Hydrolase</keyword>
<keyword id="KW-0441">Lipid A biosynthesis</keyword>
<keyword id="KW-0444">Lipid biosynthesis</keyword>
<keyword id="KW-0443">Lipid metabolism</keyword>
<keyword id="KW-0464">Manganese</keyword>
<keyword id="KW-0472">Membrane</keyword>
<keyword id="KW-0479">Metal-binding</keyword>
<organism>
    <name type="scientific">Stenotrophomonas maltophilia (strain R551-3)</name>
    <dbReference type="NCBI Taxonomy" id="391008"/>
    <lineage>
        <taxon>Bacteria</taxon>
        <taxon>Pseudomonadati</taxon>
        <taxon>Pseudomonadota</taxon>
        <taxon>Gammaproteobacteria</taxon>
        <taxon>Lysobacterales</taxon>
        <taxon>Lysobacteraceae</taxon>
        <taxon>Stenotrophomonas</taxon>
        <taxon>Stenotrophomonas maltophilia group</taxon>
    </lineage>
</organism>
<gene>
    <name evidence="1" type="primary">lpxH</name>
    <name type="ordered locus">Smal_0816</name>
</gene>
<accession>B4SLL1</accession>
<dbReference type="EC" id="3.6.1.54" evidence="1"/>
<dbReference type="EMBL" id="CP001111">
    <property type="protein sequence ID" value="ACF50521.1"/>
    <property type="molecule type" value="Genomic_DNA"/>
</dbReference>
<dbReference type="RefSeq" id="WP_012510181.1">
    <property type="nucleotide sequence ID" value="NC_011071.1"/>
</dbReference>
<dbReference type="SMR" id="B4SLL1"/>
<dbReference type="STRING" id="391008.Smal_0816"/>
<dbReference type="KEGG" id="smt:Smal_0816"/>
<dbReference type="eggNOG" id="COG2908">
    <property type="taxonomic scope" value="Bacteria"/>
</dbReference>
<dbReference type="HOGENOM" id="CLU_074586_0_0_6"/>
<dbReference type="OrthoDB" id="9783283at2"/>
<dbReference type="UniPathway" id="UPA00359">
    <property type="reaction ID" value="UER00480"/>
</dbReference>
<dbReference type="Proteomes" id="UP000001867">
    <property type="component" value="Chromosome"/>
</dbReference>
<dbReference type="GO" id="GO:0005737">
    <property type="term" value="C:cytoplasm"/>
    <property type="evidence" value="ECO:0007669"/>
    <property type="project" value="InterPro"/>
</dbReference>
<dbReference type="GO" id="GO:0019897">
    <property type="term" value="C:extrinsic component of plasma membrane"/>
    <property type="evidence" value="ECO:0007669"/>
    <property type="project" value="UniProtKB-UniRule"/>
</dbReference>
<dbReference type="GO" id="GO:0030145">
    <property type="term" value="F:manganese ion binding"/>
    <property type="evidence" value="ECO:0007669"/>
    <property type="project" value="UniProtKB-UniRule"/>
</dbReference>
<dbReference type="GO" id="GO:0008758">
    <property type="term" value="F:UDP-2,3-diacylglucosamine hydrolase activity"/>
    <property type="evidence" value="ECO:0007669"/>
    <property type="project" value="UniProtKB-UniRule"/>
</dbReference>
<dbReference type="GO" id="GO:0009245">
    <property type="term" value="P:lipid A biosynthetic process"/>
    <property type="evidence" value="ECO:0007669"/>
    <property type="project" value="UniProtKB-UniRule"/>
</dbReference>
<dbReference type="CDD" id="cd07398">
    <property type="entry name" value="MPP_YbbF-LpxH"/>
    <property type="match status" value="1"/>
</dbReference>
<dbReference type="Gene3D" id="3.60.21.10">
    <property type="match status" value="1"/>
</dbReference>
<dbReference type="HAMAP" id="MF_00575">
    <property type="entry name" value="LpxH"/>
    <property type="match status" value="1"/>
</dbReference>
<dbReference type="InterPro" id="IPR004843">
    <property type="entry name" value="Calcineurin-like_PHP_ApaH"/>
</dbReference>
<dbReference type="InterPro" id="IPR043461">
    <property type="entry name" value="LpxH-like"/>
</dbReference>
<dbReference type="InterPro" id="IPR029052">
    <property type="entry name" value="Metallo-depent_PP-like"/>
</dbReference>
<dbReference type="InterPro" id="IPR010138">
    <property type="entry name" value="UDP-diacylglucosamine_Hdrlase"/>
</dbReference>
<dbReference type="NCBIfam" id="TIGR01854">
    <property type="entry name" value="lipid_A_lpxH"/>
    <property type="match status" value="1"/>
</dbReference>
<dbReference type="NCBIfam" id="NF003743">
    <property type="entry name" value="PRK05340.1"/>
    <property type="match status" value="1"/>
</dbReference>
<dbReference type="PANTHER" id="PTHR34990:SF1">
    <property type="entry name" value="UDP-2,3-DIACYLGLUCOSAMINE HYDROLASE"/>
    <property type="match status" value="1"/>
</dbReference>
<dbReference type="PANTHER" id="PTHR34990">
    <property type="entry name" value="UDP-2,3-DIACYLGLUCOSAMINE HYDROLASE-RELATED"/>
    <property type="match status" value="1"/>
</dbReference>
<dbReference type="Pfam" id="PF00149">
    <property type="entry name" value="Metallophos"/>
    <property type="match status" value="1"/>
</dbReference>
<dbReference type="SUPFAM" id="SSF56300">
    <property type="entry name" value="Metallo-dependent phosphatases"/>
    <property type="match status" value="1"/>
</dbReference>
<sequence>MTTLFISDLHLDPSRPEITDLFLRFLREQAPTADALYILGDLFEAWIGDDTPSPAADAVADALKVLTDSGVPAYFIRGNRDFLLGEDYARRAGLRILPDPCVIELYGRPVLLQHGDLLCTDDIPYQQFRAQTRDPAFQAQFLSQPLAARIAFAQKARETSQARQSEMKQGDRATFENVTDVAPAEVDATFVRHGVDTMIHGHTHRPAIHALQAGGRACTRIVLGDWYEQGSVLRVDANGWTLDTLSRE</sequence>
<comment type="function">
    <text evidence="1">Hydrolyzes the pyrophosphate bond of UDP-2,3-diacylglucosamine to yield 2,3-diacylglucosamine 1-phosphate (lipid X) and UMP by catalyzing the attack of water at the alpha-P atom. Involved in the biosynthesis of lipid A, a phosphorylated glycolipid that anchors the lipopolysaccharide to the outer membrane of the cell.</text>
</comment>
<comment type="catalytic activity">
    <reaction evidence="1">
        <text>UDP-2-N,3-O-bis[(3R)-3-hydroxytetradecanoyl]-alpha-D-glucosamine + H2O = 2-N,3-O-bis[(3R)-3-hydroxytetradecanoyl]-alpha-D-glucosaminyl 1-phosphate + UMP + 2 H(+)</text>
        <dbReference type="Rhea" id="RHEA:25213"/>
        <dbReference type="ChEBI" id="CHEBI:15377"/>
        <dbReference type="ChEBI" id="CHEBI:15378"/>
        <dbReference type="ChEBI" id="CHEBI:57865"/>
        <dbReference type="ChEBI" id="CHEBI:57957"/>
        <dbReference type="ChEBI" id="CHEBI:78847"/>
        <dbReference type="EC" id="3.6.1.54"/>
    </reaction>
</comment>
<comment type="cofactor">
    <cofactor evidence="1">
        <name>Mn(2+)</name>
        <dbReference type="ChEBI" id="CHEBI:29035"/>
    </cofactor>
    <text evidence="1">Binds 2 Mn(2+) ions per subunit in a binuclear metal center.</text>
</comment>
<comment type="pathway">
    <text evidence="1">Glycolipid biosynthesis; lipid IV(A) biosynthesis; lipid IV(A) from (3R)-3-hydroxytetradecanoyl-[acyl-carrier-protein] and UDP-N-acetyl-alpha-D-glucosamine: step 4/6.</text>
</comment>
<comment type="subcellular location">
    <subcellularLocation>
        <location evidence="1">Cell inner membrane</location>
        <topology evidence="1">Peripheral membrane protein</topology>
        <orientation evidence="1">Cytoplasmic side</orientation>
    </subcellularLocation>
</comment>
<comment type="similarity">
    <text evidence="1">Belongs to the LpxH family.</text>
</comment>
<reference key="1">
    <citation type="submission" date="2008-06" db="EMBL/GenBank/DDBJ databases">
        <title>Complete sequence of Stenotrophomonas maltophilia R551-3.</title>
        <authorList>
            <consortium name="US DOE Joint Genome Institute"/>
            <person name="Lucas S."/>
            <person name="Copeland A."/>
            <person name="Lapidus A."/>
            <person name="Glavina del Rio T."/>
            <person name="Dalin E."/>
            <person name="Tice H."/>
            <person name="Pitluck S."/>
            <person name="Chain P."/>
            <person name="Malfatti S."/>
            <person name="Shin M."/>
            <person name="Vergez L."/>
            <person name="Lang D."/>
            <person name="Schmutz J."/>
            <person name="Larimer F."/>
            <person name="Land M."/>
            <person name="Hauser L."/>
            <person name="Kyrpides N."/>
            <person name="Mikhailova N."/>
            <person name="Taghavi S."/>
            <person name="Monchy S."/>
            <person name="Newman L."/>
            <person name="Vangronsveld J."/>
            <person name="van der Lelie D."/>
            <person name="Richardson P."/>
        </authorList>
    </citation>
    <scope>NUCLEOTIDE SEQUENCE [LARGE SCALE GENOMIC DNA]</scope>
    <source>
        <strain>R551-3</strain>
    </source>
</reference>